<comment type="function">
    <text evidence="1">Part of the Sec protein translocase complex. Interacts with the SecYEG preprotein conducting channel. Has a central role in coupling the hydrolysis of ATP to the transfer of proteins into and across the cell membrane, serving as an ATP-driven molecular motor driving the stepwise translocation of polypeptide chains across the membrane.</text>
</comment>
<comment type="catalytic activity">
    <reaction evidence="1">
        <text>ATP + H2O + cellular proteinSide 1 = ADP + phosphate + cellular proteinSide 2.</text>
        <dbReference type="EC" id="7.4.2.8"/>
    </reaction>
</comment>
<comment type="subunit">
    <text evidence="1">Monomer and homodimer. Part of the essential Sec protein translocation apparatus which comprises SecA, SecYEG and auxiliary proteins SecDF. Other proteins may also be involved.</text>
</comment>
<comment type="subcellular location">
    <subcellularLocation>
        <location evidence="1">Cell membrane</location>
        <topology evidence="1">Peripheral membrane protein</topology>
        <orientation evidence="1">Cytoplasmic side</orientation>
    </subcellularLocation>
    <subcellularLocation>
        <location evidence="1">Cytoplasm</location>
    </subcellularLocation>
    <text evidence="1">Distribution is 50-50.</text>
</comment>
<comment type="similarity">
    <text evidence="1">Belongs to the SecA family.</text>
</comment>
<sequence>MASFLEKVLRTGDKRVLKRLRTYADAVNSLEDSFKELSDAELRAETDAFRERIADGESLDRLLPEAFAAVREAASRTLGQRHFDVQIMGGAALHLGYIAEMKTGEGKTLVATAPAYLNALAGKGVHVVTVNDYLAEYQANLMGRVYRFLGLETGVILGGQEPAVRREQYAADITYGTNNEFGFDYLRDNMAWTEDELVQRGHNFAIVDEVDSILIDEARTPLIISGPASGEANRWYREFATVVQKLSPETDYEVDEKKRTVGVLEPGIEKVEDWLGIDNLYESRNTPLIGFLNNAIKAKELFRNNKDYIVAGGEVKIVDEHTGRVLAGRRYNEGVHQAIEAKEGVEIKPENQTMATITLQNYFRLYDKLSGMTGTAQTEAAEFMNTYEIGVVAIPPHRGIAREDKRDVVYKNEATKYAAVVRDIEERHEKGQPVLVGTASVEKSEYLSRLLAKRGVRHEVLNAKNHAREAAIVAQAGRKGAVTVATNMAGRGTDIMLGGNAEFNAVDRMAELGLDPERDAEEYEARWPEVLKACEEATRSEHEEVLEAGGLYVLGTERHESRRIDNQLRGRSGRQGDPGESRFYLSLSDDLMRLFNPGAAQRLMAIAPDDVPVTGRLITSGIANAQNQVEGRNAEQRKNVLKYDDVLNRQREVIYKDRKRILMGDDIEDQIRQFTEEVLSSTIAERTGKGHPEDWDLDGLWEALRAVYPVSLTPDEVVEEAGGRPRLTSDFLQEQILSDATVMYLEREEELGSEAMRNLERRVLLSVIGQRWPEHLYEMDYLKEGIGLRAMAQRDPLVEYQREGHAMFQDMMAAIREQTVVTLFNLEVRKQRTGAAGGAVELSAPQRPAFLQYTAPDEDGTPHAEVEAVDPGARERTSEDGTPTDASAGTDPAASSDRPEGETGGNRAKRRGASARSGSKAKRGKRR</sequence>
<dbReference type="EC" id="7.4.2.8" evidence="1"/>
<dbReference type="EMBL" id="AP009152">
    <property type="protein sequence ID" value="BAG29232.1"/>
    <property type="molecule type" value="Genomic_DNA"/>
</dbReference>
<dbReference type="RefSeq" id="WP_012397953.1">
    <property type="nucleotide sequence ID" value="NC_010617.1"/>
</dbReference>
<dbReference type="SMR" id="B2GL56"/>
<dbReference type="STRING" id="378753.KRH_08850"/>
<dbReference type="KEGG" id="krh:KRH_08850"/>
<dbReference type="eggNOG" id="COG0653">
    <property type="taxonomic scope" value="Bacteria"/>
</dbReference>
<dbReference type="HOGENOM" id="CLU_005314_3_0_11"/>
<dbReference type="OrthoDB" id="9805579at2"/>
<dbReference type="Proteomes" id="UP000008838">
    <property type="component" value="Chromosome"/>
</dbReference>
<dbReference type="GO" id="GO:0031522">
    <property type="term" value="C:cell envelope Sec protein transport complex"/>
    <property type="evidence" value="ECO:0007669"/>
    <property type="project" value="TreeGrafter"/>
</dbReference>
<dbReference type="GO" id="GO:0005829">
    <property type="term" value="C:cytosol"/>
    <property type="evidence" value="ECO:0007669"/>
    <property type="project" value="TreeGrafter"/>
</dbReference>
<dbReference type="GO" id="GO:0005886">
    <property type="term" value="C:plasma membrane"/>
    <property type="evidence" value="ECO:0007669"/>
    <property type="project" value="UniProtKB-SubCell"/>
</dbReference>
<dbReference type="GO" id="GO:0005524">
    <property type="term" value="F:ATP binding"/>
    <property type="evidence" value="ECO:0007669"/>
    <property type="project" value="UniProtKB-UniRule"/>
</dbReference>
<dbReference type="GO" id="GO:0008564">
    <property type="term" value="F:protein-exporting ATPase activity"/>
    <property type="evidence" value="ECO:0007669"/>
    <property type="project" value="UniProtKB-EC"/>
</dbReference>
<dbReference type="GO" id="GO:0065002">
    <property type="term" value="P:intracellular protein transmembrane transport"/>
    <property type="evidence" value="ECO:0007669"/>
    <property type="project" value="UniProtKB-UniRule"/>
</dbReference>
<dbReference type="GO" id="GO:0017038">
    <property type="term" value="P:protein import"/>
    <property type="evidence" value="ECO:0007669"/>
    <property type="project" value="InterPro"/>
</dbReference>
<dbReference type="GO" id="GO:0006605">
    <property type="term" value="P:protein targeting"/>
    <property type="evidence" value="ECO:0007669"/>
    <property type="project" value="UniProtKB-UniRule"/>
</dbReference>
<dbReference type="GO" id="GO:0043952">
    <property type="term" value="P:protein transport by the Sec complex"/>
    <property type="evidence" value="ECO:0007669"/>
    <property type="project" value="TreeGrafter"/>
</dbReference>
<dbReference type="CDD" id="cd17928">
    <property type="entry name" value="DEXDc_SecA"/>
    <property type="match status" value="1"/>
</dbReference>
<dbReference type="CDD" id="cd18803">
    <property type="entry name" value="SF2_C_secA"/>
    <property type="match status" value="1"/>
</dbReference>
<dbReference type="FunFam" id="1.10.3060.10:FF:000002">
    <property type="entry name" value="Preprotein translocase subunit SecA"/>
    <property type="match status" value="1"/>
</dbReference>
<dbReference type="FunFam" id="3.40.50.300:FF:000113">
    <property type="entry name" value="Preprotein translocase subunit SecA"/>
    <property type="match status" value="1"/>
</dbReference>
<dbReference type="FunFam" id="3.40.50.300:FF:000334">
    <property type="entry name" value="Protein translocase subunit SecA"/>
    <property type="match status" value="1"/>
</dbReference>
<dbReference type="FunFam" id="3.90.1440.10:FF:000002">
    <property type="entry name" value="Protein translocase subunit SecA"/>
    <property type="match status" value="1"/>
</dbReference>
<dbReference type="Gene3D" id="1.10.3060.10">
    <property type="entry name" value="Helical scaffold and wing domains of SecA"/>
    <property type="match status" value="1"/>
</dbReference>
<dbReference type="Gene3D" id="3.40.50.300">
    <property type="entry name" value="P-loop containing nucleotide triphosphate hydrolases"/>
    <property type="match status" value="2"/>
</dbReference>
<dbReference type="Gene3D" id="3.90.1440.10">
    <property type="entry name" value="SecA, preprotein cross-linking domain"/>
    <property type="match status" value="1"/>
</dbReference>
<dbReference type="HAMAP" id="MF_01382">
    <property type="entry name" value="SecA"/>
    <property type="match status" value="1"/>
</dbReference>
<dbReference type="InterPro" id="IPR014001">
    <property type="entry name" value="Helicase_ATP-bd"/>
</dbReference>
<dbReference type="InterPro" id="IPR027417">
    <property type="entry name" value="P-loop_NTPase"/>
</dbReference>
<dbReference type="InterPro" id="IPR000185">
    <property type="entry name" value="SecA"/>
</dbReference>
<dbReference type="InterPro" id="IPR020937">
    <property type="entry name" value="SecA_CS"/>
</dbReference>
<dbReference type="InterPro" id="IPR011115">
    <property type="entry name" value="SecA_DEAD"/>
</dbReference>
<dbReference type="InterPro" id="IPR014018">
    <property type="entry name" value="SecA_motor_DEAD"/>
</dbReference>
<dbReference type="InterPro" id="IPR011130">
    <property type="entry name" value="SecA_preprotein_X-link_dom"/>
</dbReference>
<dbReference type="InterPro" id="IPR044722">
    <property type="entry name" value="SecA_SF2_C"/>
</dbReference>
<dbReference type="InterPro" id="IPR011116">
    <property type="entry name" value="SecA_Wing/Scaffold"/>
</dbReference>
<dbReference type="InterPro" id="IPR036266">
    <property type="entry name" value="SecA_Wing/Scaffold_sf"/>
</dbReference>
<dbReference type="InterPro" id="IPR036670">
    <property type="entry name" value="SecA_X-link_sf"/>
</dbReference>
<dbReference type="NCBIfam" id="NF009538">
    <property type="entry name" value="PRK12904.1"/>
    <property type="match status" value="1"/>
</dbReference>
<dbReference type="NCBIfam" id="TIGR00963">
    <property type="entry name" value="secA"/>
    <property type="match status" value="1"/>
</dbReference>
<dbReference type="PANTHER" id="PTHR30612:SF0">
    <property type="entry name" value="CHLOROPLAST PROTEIN-TRANSPORTING ATPASE"/>
    <property type="match status" value="1"/>
</dbReference>
<dbReference type="PANTHER" id="PTHR30612">
    <property type="entry name" value="SECA INNER MEMBRANE COMPONENT OF SEC PROTEIN SECRETION SYSTEM"/>
    <property type="match status" value="1"/>
</dbReference>
<dbReference type="Pfam" id="PF21090">
    <property type="entry name" value="P-loop_SecA"/>
    <property type="match status" value="1"/>
</dbReference>
<dbReference type="Pfam" id="PF07517">
    <property type="entry name" value="SecA_DEAD"/>
    <property type="match status" value="1"/>
</dbReference>
<dbReference type="Pfam" id="PF01043">
    <property type="entry name" value="SecA_PP_bind"/>
    <property type="match status" value="1"/>
</dbReference>
<dbReference type="Pfam" id="PF07516">
    <property type="entry name" value="SecA_SW"/>
    <property type="match status" value="1"/>
</dbReference>
<dbReference type="PRINTS" id="PR00906">
    <property type="entry name" value="SECA"/>
</dbReference>
<dbReference type="SMART" id="SM00957">
    <property type="entry name" value="SecA_DEAD"/>
    <property type="match status" value="1"/>
</dbReference>
<dbReference type="SMART" id="SM00958">
    <property type="entry name" value="SecA_PP_bind"/>
    <property type="match status" value="1"/>
</dbReference>
<dbReference type="SUPFAM" id="SSF81886">
    <property type="entry name" value="Helical scaffold and wing domains of SecA"/>
    <property type="match status" value="1"/>
</dbReference>
<dbReference type="SUPFAM" id="SSF52540">
    <property type="entry name" value="P-loop containing nucleoside triphosphate hydrolases"/>
    <property type="match status" value="2"/>
</dbReference>
<dbReference type="SUPFAM" id="SSF81767">
    <property type="entry name" value="Pre-protein crosslinking domain of SecA"/>
    <property type="match status" value="1"/>
</dbReference>
<dbReference type="PROSITE" id="PS01312">
    <property type="entry name" value="SECA"/>
    <property type="match status" value="1"/>
</dbReference>
<dbReference type="PROSITE" id="PS51196">
    <property type="entry name" value="SECA_MOTOR_DEAD"/>
    <property type="match status" value="1"/>
</dbReference>
<accession>B2GL56</accession>
<feature type="chain" id="PRO_1000145026" description="Protein translocase subunit SecA">
    <location>
        <begin position="1"/>
        <end position="927"/>
    </location>
</feature>
<feature type="region of interest" description="Disordered" evidence="2">
    <location>
        <begin position="853"/>
        <end position="927"/>
    </location>
</feature>
<feature type="compositionally biased region" description="Basic and acidic residues" evidence="2">
    <location>
        <begin position="860"/>
        <end position="879"/>
    </location>
</feature>
<feature type="compositionally biased region" description="Basic residues" evidence="2">
    <location>
        <begin position="907"/>
        <end position="927"/>
    </location>
</feature>
<feature type="binding site" evidence="1">
    <location>
        <position position="86"/>
    </location>
    <ligand>
        <name>ATP</name>
        <dbReference type="ChEBI" id="CHEBI:30616"/>
    </ligand>
</feature>
<feature type="binding site" evidence="1">
    <location>
        <begin position="104"/>
        <end position="108"/>
    </location>
    <ligand>
        <name>ATP</name>
        <dbReference type="ChEBI" id="CHEBI:30616"/>
    </ligand>
</feature>
<feature type="binding site" evidence="1">
    <location>
        <position position="494"/>
    </location>
    <ligand>
        <name>ATP</name>
        <dbReference type="ChEBI" id="CHEBI:30616"/>
    </ligand>
</feature>
<gene>
    <name evidence="1" type="primary">secA</name>
    <name type="ordered locus">KRH_08850</name>
</gene>
<organism>
    <name type="scientific">Kocuria rhizophila (strain ATCC 9341 / DSM 348 / NBRC 103217 / DC2201)</name>
    <dbReference type="NCBI Taxonomy" id="378753"/>
    <lineage>
        <taxon>Bacteria</taxon>
        <taxon>Bacillati</taxon>
        <taxon>Actinomycetota</taxon>
        <taxon>Actinomycetes</taxon>
        <taxon>Micrococcales</taxon>
        <taxon>Micrococcaceae</taxon>
        <taxon>Kocuria</taxon>
    </lineage>
</organism>
<name>SECA_KOCRD</name>
<evidence type="ECO:0000255" key="1">
    <source>
        <dbReference type="HAMAP-Rule" id="MF_01382"/>
    </source>
</evidence>
<evidence type="ECO:0000256" key="2">
    <source>
        <dbReference type="SAM" id="MobiDB-lite"/>
    </source>
</evidence>
<protein>
    <recommendedName>
        <fullName evidence="1">Protein translocase subunit SecA</fullName>
        <ecNumber evidence="1">7.4.2.8</ecNumber>
    </recommendedName>
</protein>
<reference key="1">
    <citation type="journal article" date="2008" name="J. Bacteriol.">
        <title>Complete genome sequence of the soil actinomycete Kocuria rhizophila.</title>
        <authorList>
            <person name="Takarada H."/>
            <person name="Sekine M."/>
            <person name="Kosugi H."/>
            <person name="Matsuo Y."/>
            <person name="Fujisawa T."/>
            <person name="Omata S."/>
            <person name="Kishi E."/>
            <person name="Shimizu A."/>
            <person name="Tsukatani N."/>
            <person name="Tanikawa S."/>
            <person name="Fujita N."/>
            <person name="Harayama S."/>
        </authorList>
    </citation>
    <scope>NUCLEOTIDE SEQUENCE [LARGE SCALE GENOMIC DNA]</scope>
    <source>
        <strain>ATCC 9341 / DSM 348 / NBRC 103217 / DC2201</strain>
    </source>
</reference>
<keyword id="KW-0067">ATP-binding</keyword>
<keyword id="KW-1003">Cell membrane</keyword>
<keyword id="KW-0963">Cytoplasm</keyword>
<keyword id="KW-0472">Membrane</keyword>
<keyword id="KW-0547">Nucleotide-binding</keyword>
<keyword id="KW-0653">Protein transport</keyword>
<keyword id="KW-1185">Reference proteome</keyword>
<keyword id="KW-1278">Translocase</keyword>
<keyword id="KW-0811">Translocation</keyword>
<keyword id="KW-0813">Transport</keyword>
<proteinExistence type="inferred from homology"/>